<geneLocation type="mitochondrion"/>
<feature type="chain" id="PRO_0000183571" description="Cytochrome c oxidase subunit 2">
    <location>
        <begin position="1"/>
        <end position="228"/>
    </location>
</feature>
<feature type="topological domain" description="Mitochondrial intermembrane" evidence="3">
    <location>
        <begin position="1"/>
        <end position="14"/>
    </location>
</feature>
<feature type="transmembrane region" description="Helical; Name=I" evidence="3">
    <location>
        <begin position="15"/>
        <end position="45"/>
    </location>
</feature>
<feature type="topological domain" description="Mitochondrial matrix" evidence="3">
    <location>
        <begin position="46"/>
        <end position="59"/>
    </location>
</feature>
<feature type="transmembrane region" description="Helical; Name=II" evidence="3">
    <location>
        <begin position="60"/>
        <end position="87"/>
    </location>
</feature>
<feature type="topological domain" description="Mitochondrial intermembrane" evidence="3">
    <location>
        <begin position="88"/>
        <end position="228"/>
    </location>
</feature>
<feature type="binding site" evidence="3">
    <location>
        <position position="162"/>
    </location>
    <ligand>
        <name>Cu cation</name>
        <dbReference type="ChEBI" id="CHEBI:23378"/>
        <label>A1</label>
    </ligand>
</feature>
<feature type="binding site" evidence="3">
    <location>
        <position position="197"/>
    </location>
    <ligand>
        <name>Cu cation</name>
        <dbReference type="ChEBI" id="CHEBI:23378"/>
        <label>A1</label>
    </ligand>
</feature>
<feature type="binding site" evidence="3">
    <location>
        <position position="197"/>
    </location>
    <ligand>
        <name>Cu cation</name>
        <dbReference type="ChEBI" id="CHEBI:23378"/>
        <label>A2</label>
    </ligand>
</feature>
<feature type="binding site" evidence="3">
    <location>
        <position position="199"/>
    </location>
    <ligand>
        <name>Cu cation</name>
        <dbReference type="ChEBI" id="CHEBI:23378"/>
        <label>A2</label>
    </ligand>
</feature>
<feature type="binding site" evidence="3">
    <location>
        <position position="199"/>
    </location>
    <ligand>
        <name>Mg(2+)</name>
        <dbReference type="ChEBI" id="CHEBI:18420"/>
        <note>ligand shared with MT-CO1</note>
    </ligand>
</feature>
<feature type="binding site" evidence="3">
    <location>
        <position position="201"/>
    </location>
    <ligand>
        <name>Cu cation</name>
        <dbReference type="ChEBI" id="CHEBI:23378"/>
        <label>A1</label>
    </ligand>
</feature>
<feature type="binding site" evidence="3">
    <location>
        <position position="201"/>
    </location>
    <ligand>
        <name>Cu cation</name>
        <dbReference type="ChEBI" id="CHEBI:23378"/>
        <label>A2</label>
    </ligand>
</feature>
<feature type="binding site" evidence="3">
    <location>
        <position position="205"/>
    </location>
    <ligand>
        <name>Cu cation</name>
        <dbReference type="ChEBI" id="CHEBI:23378"/>
        <label>A2</label>
    </ligand>
</feature>
<feature type="binding site" evidence="3">
    <location>
        <position position="208"/>
    </location>
    <ligand>
        <name>Cu cation</name>
        <dbReference type="ChEBI" id="CHEBI:23378"/>
        <label>A1</label>
    </ligand>
</feature>
<accession>O79549</accession>
<name>COX2_LYCSM</name>
<gene>
    <name type="primary">MT-CO2</name>
    <name type="synonym">COII</name>
    <name type="synonym">COXII</name>
    <name type="synonym">MTCO2</name>
</gene>
<evidence type="ECO:0000250" key="1">
    <source>
        <dbReference type="UniProtKB" id="P00403"/>
    </source>
</evidence>
<evidence type="ECO:0000250" key="2">
    <source>
        <dbReference type="UniProtKB" id="P00410"/>
    </source>
</evidence>
<evidence type="ECO:0000250" key="3">
    <source>
        <dbReference type="UniProtKB" id="P68530"/>
    </source>
</evidence>
<evidence type="ECO:0000305" key="4"/>
<sequence length="228" mass="25648">MPHASQLSLQEAMGPTMEEVIFLHDHVLLLTCLMTMVITMFTLTATTTALTHNDPTEEVEQLEAAWTVAPIMILILTALPSVRSLYLMEEVFNPYLTIKATGHQWYWNYEYSDGVKISFDSYMIQTKDLQNGSPRLLEVDHRMVMPAGLQTRVVVTAEDVLHSWTIPSLGVKVDAVPGRLNQLPLATSRVGVFYGQCSEICGANHSFMPIAMEATPLHHFEQWLISEQ</sequence>
<proteinExistence type="inferred from homology"/>
<dbReference type="EC" id="7.1.1.9"/>
<dbReference type="EMBL" id="AB008539">
    <property type="protein sequence ID" value="BAA33025.1"/>
    <property type="molecule type" value="Genomic_DNA"/>
</dbReference>
<dbReference type="PIR" id="T11091">
    <property type="entry name" value="T11091"/>
</dbReference>
<dbReference type="SMR" id="O79549"/>
<dbReference type="CTD" id="4513"/>
<dbReference type="GO" id="GO:0005743">
    <property type="term" value="C:mitochondrial inner membrane"/>
    <property type="evidence" value="ECO:0007669"/>
    <property type="project" value="UniProtKB-SubCell"/>
</dbReference>
<dbReference type="GO" id="GO:0045277">
    <property type="term" value="C:respiratory chain complex IV"/>
    <property type="evidence" value="ECO:0000250"/>
    <property type="project" value="UniProtKB"/>
</dbReference>
<dbReference type="GO" id="GO:0005507">
    <property type="term" value="F:copper ion binding"/>
    <property type="evidence" value="ECO:0007669"/>
    <property type="project" value="InterPro"/>
</dbReference>
<dbReference type="GO" id="GO:0004129">
    <property type="term" value="F:cytochrome-c oxidase activity"/>
    <property type="evidence" value="ECO:0007669"/>
    <property type="project" value="UniProtKB-EC"/>
</dbReference>
<dbReference type="GO" id="GO:0042773">
    <property type="term" value="P:ATP synthesis coupled electron transport"/>
    <property type="evidence" value="ECO:0007669"/>
    <property type="project" value="TreeGrafter"/>
</dbReference>
<dbReference type="CDD" id="cd13912">
    <property type="entry name" value="CcO_II_C"/>
    <property type="match status" value="1"/>
</dbReference>
<dbReference type="FunFam" id="2.60.40.420:FF:000001">
    <property type="entry name" value="Cytochrome c oxidase subunit 2"/>
    <property type="match status" value="1"/>
</dbReference>
<dbReference type="Gene3D" id="1.10.287.90">
    <property type="match status" value="1"/>
</dbReference>
<dbReference type="Gene3D" id="2.60.40.420">
    <property type="entry name" value="Cupredoxins - blue copper proteins"/>
    <property type="match status" value="1"/>
</dbReference>
<dbReference type="InterPro" id="IPR045187">
    <property type="entry name" value="CcO_II"/>
</dbReference>
<dbReference type="InterPro" id="IPR002429">
    <property type="entry name" value="CcO_II-like_C"/>
</dbReference>
<dbReference type="InterPro" id="IPR034210">
    <property type="entry name" value="CcO_II_C"/>
</dbReference>
<dbReference type="InterPro" id="IPR001505">
    <property type="entry name" value="Copper_CuA"/>
</dbReference>
<dbReference type="InterPro" id="IPR008972">
    <property type="entry name" value="Cupredoxin"/>
</dbReference>
<dbReference type="InterPro" id="IPR014222">
    <property type="entry name" value="Cyt_c_oxidase_su2"/>
</dbReference>
<dbReference type="InterPro" id="IPR011759">
    <property type="entry name" value="Cyt_c_oxidase_su2_TM_dom"/>
</dbReference>
<dbReference type="InterPro" id="IPR036257">
    <property type="entry name" value="Cyt_c_oxidase_su2_TM_sf"/>
</dbReference>
<dbReference type="NCBIfam" id="TIGR02866">
    <property type="entry name" value="CoxB"/>
    <property type="match status" value="1"/>
</dbReference>
<dbReference type="PANTHER" id="PTHR22888:SF9">
    <property type="entry name" value="CYTOCHROME C OXIDASE SUBUNIT 2"/>
    <property type="match status" value="1"/>
</dbReference>
<dbReference type="PANTHER" id="PTHR22888">
    <property type="entry name" value="CYTOCHROME C OXIDASE, SUBUNIT II"/>
    <property type="match status" value="1"/>
</dbReference>
<dbReference type="Pfam" id="PF00116">
    <property type="entry name" value="COX2"/>
    <property type="match status" value="1"/>
</dbReference>
<dbReference type="Pfam" id="PF02790">
    <property type="entry name" value="COX2_TM"/>
    <property type="match status" value="1"/>
</dbReference>
<dbReference type="PRINTS" id="PR01166">
    <property type="entry name" value="CYCOXIDASEII"/>
</dbReference>
<dbReference type="SUPFAM" id="SSF49503">
    <property type="entry name" value="Cupredoxins"/>
    <property type="match status" value="1"/>
</dbReference>
<dbReference type="SUPFAM" id="SSF81464">
    <property type="entry name" value="Cytochrome c oxidase subunit II-like, transmembrane region"/>
    <property type="match status" value="1"/>
</dbReference>
<dbReference type="PROSITE" id="PS00078">
    <property type="entry name" value="COX2"/>
    <property type="match status" value="1"/>
</dbReference>
<dbReference type="PROSITE" id="PS50857">
    <property type="entry name" value="COX2_CUA"/>
    <property type="match status" value="1"/>
</dbReference>
<dbReference type="PROSITE" id="PS50999">
    <property type="entry name" value="COX2_TM"/>
    <property type="match status" value="1"/>
</dbReference>
<keyword id="KW-0186">Copper</keyword>
<keyword id="KW-0249">Electron transport</keyword>
<keyword id="KW-0460">Magnesium</keyword>
<keyword id="KW-0472">Membrane</keyword>
<keyword id="KW-0479">Metal-binding</keyword>
<keyword id="KW-0496">Mitochondrion</keyword>
<keyword id="KW-0999">Mitochondrion inner membrane</keyword>
<keyword id="KW-0679">Respiratory chain</keyword>
<keyword id="KW-1278">Translocase</keyword>
<keyword id="KW-0812">Transmembrane</keyword>
<keyword id="KW-1133">Transmembrane helix</keyword>
<keyword id="KW-0813">Transport</keyword>
<organism>
    <name type="scientific">Lycodon semicarinatus</name>
    <name type="common">Ryukyu odd-tooth snake</name>
    <name type="synonym">Eumesodon semicarinatus</name>
    <dbReference type="NCBI Taxonomy" id="56549"/>
    <lineage>
        <taxon>Eukaryota</taxon>
        <taxon>Metazoa</taxon>
        <taxon>Chordata</taxon>
        <taxon>Craniata</taxon>
        <taxon>Vertebrata</taxon>
        <taxon>Euteleostomi</taxon>
        <taxon>Lepidosauria</taxon>
        <taxon>Squamata</taxon>
        <taxon>Bifurcata</taxon>
        <taxon>Unidentata</taxon>
        <taxon>Episquamata</taxon>
        <taxon>Toxicofera</taxon>
        <taxon>Serpentes</taxon>
        <taxon>Colubroidea</taxon>
        <taxon>Colubridae</taxon>
        <taxon>Colubrinae</taxon>
        <taxon>Lycodon</taxon>
    </lineage>
</organism>
<protein>
    <recommendedName>
        <fullName>Cytochrome c oxidase subunit 2</fullName>
        <ecNumber>7.1.1.9</ecNumber>
    </recommendedName>
    <alternativeName>
        <fullName>Cytochrome c oxidase polypeptide II</fullName>
    </alternativeName>
</protein>
<comment type="function">
    <text evidence="2">Component of the cytochrome c oxidase, the last enzyme in the mitochondrial electron transport chain which drives oxidative phosphorylation. The respiratory chain contains 3 multisubunit complexes succinate dehydrogenase (complex II, CII), ubiquinol-cytochrome c oxidoreductase (cytochrome b-c1 complex, complex III, CIII) and cytochrome c oxidase (complex IV, CIV), that cooperate to transfer electrons derived from NADH and succinate to molecular oxygen, creating an electrochemical gradient over the inner membrane that drives transmembrane transport and the ATP synthase. Cytochrome c oxidase is the component of the respiratory chain that catalyzes the reduction of oxygen to water. Electrons originating from reduced cytochrome c in the intermembrane space (IMS) are transferred via the dinuclear copper A center (CU(A)) of subunit 2 and heme A of subunit 1 to the active site in subunit 1, a binuclear center (BNC) formed by heme A3 and copper B (CU(B)). The BNC reduces molecular oxygen to 2 water molecules using 4 electrons from cytochrome c in the IMS and 4 protons from the mitochondrial matrix.</text>
</comment>
<comment type="catalytic activity">
    <reaction evidence="2">
        <text>4 Fe(II)-[cytochrome c] + O2 + 8 H(+)(in) = 4 Fe(III)-[cytochrome c] + 2 H2O + 4 H(+)(out)</text>
        <dbReference type="Rhea" id="RHEA:11436"/>
        <dbReference type="Rhea" id="RHEA-COMP:10350"/>
        <dbReference type="Rhea" id="RHEA-COMP:14399"/>
        <dbReference type="ChEBI" id="CHEBI:15377"/>
        <dbReference type="ChEBI" id="CHEBI:15378"/>
        <dbReference type="ChEBI" id="CHEBI:15379"/>
        <dbReference type="ChEBI" id="CHEBI:29033"/>
        <dbReference type="ChEBI" id="CHEBI:29034"/>
        <dbReference type="EC" id="7.1.1.9"/>
    </reaction>
    <physiologicalReaction direction="left-to-right" evidence="2">
        <dbReference type="Rhea" id="RHEA:11437"/>
    </physiologicalReaction>
</comment>
<comment type="cofactor">
    <cofactor evidence="3">
        <name>Cu cation</name>
        <dbReference type="ChEBI" id="CHEBI:23378"/>
    </cofactor>
    <text evidence="3">Binds a dinuclear copper A center per subunit.</text>
</comment>
<comment type="subunit">
    <text evidence="1 3">Component of the cytochrome c oxidase (complex IV, CIV), a multisubunit enzyme composed of 14 subunits. The complex is composed of a catalytic core of 3 subunits MT-CO1, MT-CO2 and MT-CO3, encoded in the mitochondrial DNA, and 11 supernumerary subunits COX4I, COX5A, COX5B, COX6A, COX6B, COX6C, COX7A, COX7B, COX7C, COX8 and NDUFA4, which are encoded in the nuclear genome. The complex exists as a monomer or a dimer and forms supercomplexes (SCs) in the inner mitochondrial membrane with NADH-ubiquinone oxidoreductase (complex I, CI) and ubiquinol-cytochrome c oxidoreductase (cytochrome b-c1 complex, complex III, CIII), resulting in different assemblies (supercomplex SCI(1)III(2)IV(1) and megacomplex MCI(2)III(2)IV(2)) (By similarity). Found in a complex with TMEM177, COA6, COX18, COX20, SCO1 and SCO2. Interacts with TMEM177 in a COX20-dependent manner. Interacts with COX20. Interacts with COX16 (By similarity).</text>
</comment>
<comment type="subcellular location">
    <subcellularLocation>
        <location evidence="3">Mitochondrion inner membrane</location>
        <topology evidence="3">Multi-pass membrane protein</topology>
    </subcellularLocation>
</comment>
<comment type="similarity">
    <text evidence="4">Belongs to the cytochrome c oxidase subunit 2 family.</text>
</comment>
<reference key="1">
    <citation type="journal article" date="1998" name="Genetics">
        <title>The complete nucleotide sequence of a snake (Dinodon semicarinatus) mitochondrial genome with two identical control regions.</title>
        <authorList>
            <person name="Kumazawa Y."/>
            <person name="Ota H."/>
            <person name="Nishida M."/>
            <person name="Ozawa T."/>
        </authorList>
    </citation>
    <scope>NUCLEOTIDE SEQUENCE [GENOMIC DNA]</scope>
    <source>
        <tissue>Liver</tissue>
    </source>
</reference>